<organism>
    <name type="scientific">Vibrio cholerae serotype O1 (strain M66-2)</name>
    <dbReference type="NCBI Taxonomy" id="579112"/>
    <lineage>
        <taxon>Bacteria</taxon>
        <taxon>Pseudomonadati</taxon>
        <taxon>Pseudomonadota</taxon>
        <taxon>Gammaproteobacteria</taxon>
        <taxon>Vibrionales</taxon>
        <taxon>Vibrionaceae</taxon>
        <taxon>Vibrio</taxon>
    </lineage>
</organism>
<name>NUSB_VIBCM</name>
<keyword id="KW-0694">RNA-binding</keyword>
<keyword id="KW-0804">Transcription</keyword>
<keyword id="KW-0889">Transcription antitermination</keyword>
<keyword id="KW-0805">Transcription regulation</keyword>
<dbReference type="EMBL" id="CP001233">
    <property type="protein sequence ID" value="ACP06491.1"/>
    <property type="molecule type" value="Genomic_DNA"/>
</dbReference>
<dbReference type="RefSeq" id="WP_000501296.1">
    <property type="nucleotide sequence ID" value="NC_012578.1"/>
</dbReference>
<dbReference type="SMR" id="C3LQ39"/>
<dbReference type="GeneID" id="89513739"/>
<dbReference type="KEGG" id="vcm:VCM66_2190"/>
<dbReference type="HOGENOM" id="CLU_087843_4_1_6"/>
<dbReference type="Proteomes" id="UP000001217">
    <property type="component" value="Chromosome I"/>
</dbReference>
<dbReference type="GO" id="GO:0005829">
    <property type="term" value="C:cytosol"/>
    <property type="evidence" value="ECO:0007669"/>
    <property type="project" value="TreeGrafter"/>
</dbReference>
<dbReference type="GO" id="GO:0003723">
    <property type="term" value="F:RNA binding"/>
    <property type="evidence" value="ECO:0007669"/>
    <property type="project" value="UniProtKB-UniRule"/>
</dbReference>
<dbReference type="GO" id="GO:0006353">
    <property type="term" value="P:DNA-templated transcription termination"/>
    <property type="evidence" value="ECO:0007669"/>
    <property type="project" value="UniProtKB-UniRule"/>
</dbReference>
<dbReference type="GO" id="GO:0031564">
    <property type="term" value="P:transcription antitermination"/>
    <property type="evidence" value="ECO:0007669"/>
    <property type="project" value="UniProtKB-KW"/>
</dbReference>
<dbReference type="FunFam" id="1.10.940.10:FF:000001">
    <property type="entry name" value="Transcription antitermination factor NusB"/>
    <property type="match status" value="1"/>
</dbReference>
<dbReference type="Gene3D" id="1.10.940.10">
    <property type="entry name" value="NusB-like"/>
    <property type="match status" value="1"/>
</dbReference>
<dbReference type="HAMAP" id="MF_00073">
    <property type="entry name" value="NusB"/>
    <property type="match status" value="1"/>
</dbReference>
<dbReference type="InterPro" id="IPR035926">
    <property type="entry name" value="NusB-like_sf"/>
</dbReference>
<dbReference type="InterPro" id="IPR011605">
    <property type="entry name" value="NusB_fam"/>
</dbReference>
<dbReference type="InterPro" id="IPR006027">
    <property type="entry name" value="NusB_RsmB_TIM44"/>
</dbReference>
<dbReference type="NCBIfam" id="TIGR01951">
    <property type="entry name" value="nusB"/>
    <property type="match status" value="1"/>
</dbReference>
<dbReference type="PANTHER" id="PTHR11078:SF3">
    <property type="entry name" value="ANTITERMINATION NUSB DOMAIN-CONTAINING PROTEIN"/>
    <property type="match status" value="1"/>
</dbReference>
<dbReference type="PANTHER" id="PTHR11078">
    <property type="entry name" value="N UTILIZATION SUBSTANCE PROTEIN B-RELATED"/>
    <property type="match status" value="1"/>
</dbReference>
<dbReference type="Pfam" id="PF01029">
    <property type="entry name" value="NusB"/>
    <property type="match status" value="1"/>
</dbReference>
<dbReference type="SUPFAM" id="SSF48013">
    <property type="entry name" value="NusB-like"/>
    <property type="match status" value="1"/>
</dbReference>
<accession>C3LQ39</accession>
<evidence type="ECO:0000255" key="1">
    <source>
        <dbReference type="HAMAP-Rule" id="MF_00073"/>
    </source>
</evidence>
<reference key="1">
    <citation type="journal article" date="2008" name="PLoS ONE">
        <title>A recalibrated molecular clock and independent origins for the cholera pandemic clones.</title>
        <authorList>
            <person name="Feng L."/>
            <person name="Reeves P.R."/>
            <person name="Lan R."/>
            <person name="Ren Y."/>
            <person name="Gao C."/>
            <person name="Zhou Z."/>
            <person name="Ren Y."/>
            <person name="Cheng J."/>
            <person name="Wang W."/>
            <person name="Wang J."/>
            <person name="Qian W."/>
            <person name="Li D."/>
            <person name="Wang L."/>
        </authorList>
    </citation>
    <scope>NUCLEOTIDE SEQUENCE [LARGE SCALE GENOMIC DNA]</scope>
    <source>
        <strain>M66-2</strain>
    </source>
</reference>
<comment type="function">
    <text evidence="1">Involved in transcription antitermination. Required for transcription of ribosomal RNA (rRNA) genes. Binds specifically to the boxA antiterminator sequence of the ribosomal RNA (rrn) operons.</text>
</comment>
<comment type="similarity">
    <text evidence="1">Belongs to the NusB family.</text>
</comment>
<feature type="chain" id="PRO_1000192467" description="Transcription antitermination protein NusB">
    <location>
        <begin position="1"/>
        <end position="156"/>
    </location>
</feature>
<protein>
    <recommendedName>
        <fullName evidence="1">Transcription antitermination protein NusB</fullName>
    </recommendedName>
    <alternativeName>
        <fullName evidence="1">Antitermination factor NusB</fullName>
    </alternativeName>
</protein>
<sequence length="156" mass="17675">MGASVKPAARRNARQFALQAIYSWQITKENVATIEEQFLTSGKYDEEEHRAAEPALAAPETDVSYFRDLLAGVVLNHNELDSKLRPFVSRPMQDLDMMELALLRLAMYEMTRREDVPYKVVINEAIELAKVFAAEDSHKFVNGVLDKAAPHVRKKA</sequence>
<gene>
    <name evidence="1" type="primary">nusB</name>
    <name type="ordered locus">VCM66_2190</name>
</gene>
<proteinExistence type="inferred from homology"/>